<reference evidence="8 9" key="1">
    <citation type="journal article" date="1998" name="Plant Mol. Biol.">
        <title>Characterization of tomato PHYB1 and identification of molecular defects in four mutant alleles.</title>
        <authorList>
            <person name="Lazarova G.I."/>
            <person name="Kubota T."/>
            <person name="Frances S."/>
            <person name="Peters J.L."/>
            <person name="Hughes M.J.G."/>
            <person name="Brandstaedter J."/>
            <person name="Szell M."/>
            <person name="Matsui M."/>
            <person name="Kendrick R.E."/>
            <person name="Cordonnier-Pratt M.-M."/>
            <person name="Pratt L.H."/>
        </authorList>
    </citation>
    <scope>NUCLEOTIDE SEQUENCE [GENOMIC DNA] (ISOFORM 1)</scope>
    <scope>NUCLEOTIDE SEQUENCE [MRNA] (ISOFORMS 2; 3; 4; 5 AND 6)</scope>
    <scope>MUTANT TRI3</scope>
</reference>
<comment type="function">
    <text evidence="8">Regulatory photoreceptor which exists in two forms that are reversibly interconvertible by light: the Pr form that absorbs maximally in the red region of the spectrum and the Pfr form that absorbs maximally in the far-red region. Photoconversion of Pr to Pfr induces an array of morphogenic responses, whereas reconversion of Pfr to Pr cancels the induction of those responses. Pfr controls the expression of a number of nuclear genes including those encoding the small subunit of ribulose-bisphosphate carboxylase, chlorophyll A/B binding protein, protochlorophyllide reductase, rRNA, etc. It also controls the expression of its own gene(s) in a negative feedback fashion.</text>
</comment>
<comment type="subunit">
    <text evidence="8">Homodimer.</text>
</comment>
<comment type="alternative products">
    <event type="alternative splicing"/>
    <isoform>
        <id>Q9ZS62-1</id>
        <name evidence="6">1</name>
        <sequence type="displayed"/>
    </isoform>
    <isoform>
        <id>Q9ZS62-2</id>
        <name evidence="6">2</name>
        <sequence type="described" ref="VSP_051666"/>
    </isoform>
    <isoform>
        <id>Q9ZS62-3</id>
        <name evidence="6">3</name>
        <sequence type="described" ref="VSP_051667 VSP_051668"/>
    </isoform>
    <isoform>
        <id>Q9ZS62-4</id>
        <name evidence="6">4</name>
        <sequence type="described" ref="VSP_051669"/>
    </isoform>
    <isoform>
        <id>Q9ZS62-5</id>
        <name evidence="6">5</name>
        <sequence type="described" ref="VSP_051672 VSP_051673"/>
    </isoform>
    <isoform>
        <id>Q9ZS62-6</id>
        <name evidence="6">6</name>
        <sequence type="described" ref="VSP_051670 VSP_051671"/>
    </isoform>
</comment>
<comment type="PTM">
    <text evidence="1">Contains one covalently linked phytochromobilin chromophore.</text>
</comment>
<comment type="miscellaneous">
    <molecule>Isoform 3</molecule>
    <text evidence="8">May be produced at very low levels due to a premature stop codon in the mRNA, leading to nonsense-mediated mRNA decay.</text>
</comment>
<comment type="miscellaneous">
    <molecule>Isoform 5</molecule>
    <text evidence="8">May be produced at very low levels due to a premature stop codon in the mRNA, leading to nonsense-mediated mRNA decay.</text>
</comment>
<comment type="miscellaneous">
    <molecule>Isoform 6</molecule>
    <text evidence="8">May be produced at very low levels due to a premature stop codon in the mRNA, leading to nonsense-mediated mRNA decay.</text>
</comment>
<comment type="similarity">
    <text evidence="2">Belongs to the phytochrome family.</text>
</comment>
<gene>
    <name evidence="9" type="primary">PHYB1</name>
</gene>
<protein>
    <recommendedName>
        <fullName>Phytochrome B1</fullName>
    </recommendedName>
</protein>
<sequence>MASGSRTKHSYHNSSQGQAQSSGTSNMNYKDSISKAIAQYTADARLHAVFEQSGESGKSFDYSQSVKTTTQSVPERQITAYLTKIQRGGHIQPFGCMIAVDEASFRIIAYSENACEMLSLTPQSVPSLDKSEILTVGTDVRTLFTPSSSVLLERAFGAREITLLNPIWIHSKNSGKPFYAILHRVDVGIVIDLEPARTEDPALSIAGAVQSQKLAVRAISHLQSLPGGDIKLLCDTVVESVRELTGYDRVMVYKFHEDEHGEVVAESKRSDLEPYIGLHYPATDIPQASRFLFKQNRVRMIVDCHATPVRVTQDESLMQPLCLVGSTLRAPHGCHAQYMANMGSIASLTLAVIINGNDEEAVGGGRNSMRLWGLVVGHHTSVRSIPFPLRYACEFLMQAFGLQLNMELQLASQLSEKHVLRTQTLLCDMLLRDSPPGIVTQSPSIMDLVKCDGAALYYQRKYYPLGVTPTEAQIKDIVEWLLAYHGDSTGLSTDSLADAGYPGAASLGDAVCGMAVAYITSKDFLFWFRSHTAKEIKWGGAKHHPEDKDDGQRMHPRSSFKAFLEVVKSRSSPWENAEMDAIHSLQLILRDSFKDAEASNSKAIVHALGEMELQGIDELSSVAREMVRLIETATAPIFGVDVNGRINGWNEKVVELTGLSAEEAKGKSLVHDLLYKESQESAEKLLYNALRGVEGKNVEIKLRTFGAEQVEKAVFLVVNACSSRDYTNSIVGVSFVGQDVTGEKIVMDKFIHIQGDYKAIVHSPNPLIPPIFASDENTSCSEWNTAMEKLSGWSREEIVGKMLVGEIFGSCCRLKGPDAMTKFMIVLHNAIGGQDTDKFPFSFFDRNGKYVQALLTANKRVNMEGDTIGAFCFIQIASPELQQALRVQRQQEKKCYSQMKELAYICQEVKSPLNGIRFTNSLLEATNLTEYQKQYLETSAACERQMSKIIRDVDLENIEDGSLTLEKEDFFLGSVIDAVVSQVMLLLREKGVQLIRDIPEEIKTLTVHGDQVRIQQVLADFLLNMVRYAPSPDGWVEIQLRPSMMPISDGATVVHIELRIICPGEGLPPELVQDMFHSSRWVTQEGLGLSMCRKMLKLMNGEIQYIRESERCYFMIILDLPMTRKGPKSVG</sequence>
<dbReference type="EMBL" id="AJ002281">
    <property type="protein sequence ID" value="CAA05293.1"/>
    <property type="molecule type" value="Genomic_DNA"/>
</dbReference>
<dbReference type="EMBL" id="AJ002282">
    <property type="protein sequence ID" value="CAA05294.1"/>
    <property type="molecule type" value="mRNA"/>
</dbReference>
<dbReference type="EMBL" id="AJ002283">
    <property type="protein sequence ID" value="CAA05295.1"/>
    <property type="molecule type" value="mRNA"/>
</dbReference>
<dbReference type="EMBL" id="AJ002284">
    <property type="protein sequence ID" value="CAA05296.1"/>
    <property type="molecule type" value="mRNA"/>
</dbReference>
<dbReference type="EMBL" id="AJ002285">
    <property type="protein sequence ID" value="CAA05297.1"/>
    <property type="molecule type" value="mRNA"/>
</dbReference>
<dbReference type="EMBL" id="AJ002287">
    <property type="protein sequence ID" value="CAA05298.1"/>
    <property type="molecule type" value="mRNA"/>
</dbReference>
<dbReference type="RefSeq" id="NP_001293131.1">
    <molecule id="Q9ZS62-1"/>
    <property type="nucleotide sequence ID" value="NM_001306202.1"/>
</dbReference>
<dbReference type="SMR" id="Q9ZS62"/>
<dbReference type="FunCoup" id="Q9ZS62">
    <property type="interactions" value="701"/>
</dbReference>
<dbReference type="STRING" id="4081.Q9ZS62"/>
<dbReference type="PaxDb" id="4081-Solyc01g059870.2.1"/>
<dbReference type="EnsemblPlants" id="Solyc01g059870.3.1">
    <molecule id="Q9ZS62-1"/>
    <property type="protein sequence ID" value="Solyc01g059870.3.1"/>
    <property type="gene ID" value="Solyc01g059870.3"/>
</dbReference>
<dbReference type="GeneID" id="101262847"/>
<dbReference type="Gramene" id="Solyc01g059870.3.1">
    <molecule id="Q9ZS62-1"/>
    <property type="protein sequence ID" value="Solyc01g059870.3.1"/>
    <property type="gene ID" value="Solyc01g059870.3"/>
</dbReference>
<dbReference type="KEGG" id="sly:101262847"/>
<dbReference type="eggNOG" id="ENOG502QRNS">
    <property type="taxonomic scope" value="Eukaryota"/>
</dbReference>
<dbReference type="HOGENOM" id="CLU_010418_0_0_1"/>
<dbReference type="InParanoid" id="Q9ZS62"/>
<dbReference type="OMA" id="DDNTCCS"/>
<dbReference type="OrthoDB" id="2015534at2759"/>
<dbReference type="PhylomeDB" id="Q9ZS62"/>
<dbReference type="Proteomes" id="UP000004994">
    <property type="component" value="Chromosome 1"/>
</dbReference>
<dbReference type="ExpressionAtlas" id="Q9ZS62">
    <property type="expression patterns" value="baseline and differential"/>
</dbReference>
<dbReference type="GO" id="GO:0005634">
    <property type="term" value="C:nucleus"/>
    <property type="evidence" value="ECO:0000318"/>
    <property type="project" value="GO_Central"/>
</dbReference>
<dbReference type="GO" id="GO:0000155">
    <property type="term" value="F:phosphorelay sensor kinase activity"/>
    <property type="evidence" value="ECO:0007669"/>
    <property type="project" value="InterPro"/>
</dbReference>
<dbReference type="GO" id="GO:0009881">
    <property type="term" value="F:photoreceptor activity"/>
    <property type="evidence" value="ECO:0007669"/>
    <property type="project" value="UniProtKB-KW"/>
</dbReference>
<dbReference type="GO" id="GO:0042803">
    <property type="term" value="F:protein homodimerization activity"/>
    <property type="evidence" value="ECO:0007669"/>
    <property type="project" value="InterPro"/>
</dbReference>
<dbReference type="GO" id="GO:0009584">
    <property type="term" value="P:detection of visible light"/>
    <property type="evidence" value="ECO:0007669"/>
    <property type="project" value="InterPro"/>
</dbReference>
<dbReference type="GO" id="GO:0009585">
    <property type="term" value="P:red, far-red light phototransduction"/>
    <property type="evidence" value="ECO:0007669"/>
    <property type="project" value="InterPro"/>
</dbReference>
<dbReference type="GO" id="GO:0006355">
    <property type="term" value="P:regulation of DNA-templated transcription"/>
    <property type="evidence" value="ECO:0007669"/>
    <property type="project" value="InterPro"/>
</dbReference>
<dbReference type="CDD" id="cd16932">
    <property type="entry name" value="HATPase_Phy-like"/>
    <property type="match status" value="1"/>
</dbReference>
<dbReference type="CDD" id="cd00082">
    <property type="entry name" value="HisKA"/>
    <property type="match status" value="1"/>
</dbReference>
<dbReference type="CDD" id="cd00130">
    <property type="entry name" value="PAS"/>
    <property type="match status" value="2"/>
</dbReference>
<dbReference type="FunFam" id="1.10.287.130:FF:000029">
    <property type="entry name" value="Phytochrome"/>
    <property type="match status" value="1"/>
</dbReference>
<dbReference type="FunFam" id="3.30.450.20:FF:000034">
    <property type="entry name" value="Phytochrome"/>
    <property type="match status" value="1"/>
</dbReference>
<dbReference type="FunFam" id="3.30.450.20:FF:000039">
    <property type="entry name" value="Phytochrome"/>
    <property type="match status" value="1"/>
</dbReference>
<dbReference type="FunFam" id="3.30.450.270:FF:000001">
    <property type="entry name" value="Phytochrome"/>
    <property type="match status" value="1"/>
</dbReference>
<dbReference type="FunFam" id="3.30.565.10:FF:000044">
    <property type="entry name" value="Phytochrome"/>
    <property type="match status" value="1"/>
</dbReference>
<dbReference type="Gene3D" id="1.10.287.130">
    <property type="match status" value="1"/>
</dbReference>
<dbReference type="Gene3D" id="3.30.450.270">
    <property type="match status" value="1"/>
</dbReference>
<dbReference type="Gene3D" id="3.30.450.40">
    <property type="match status" value="1"/>
</dbReference>
<dbReference type="Gene3D" id="3.30.565.10">
    <property type="entry name" value="Histidine kinase-like ATPase, C-terminal domain"/>
    <property type="match status" value="1"/>
</dbReference>
<dbReference type="Gene3D" id="3.30.450.20">
    <property type="entry name" value="PAS domain"/>
    <property type="match status" value="3"/>
</dbReference>
<dbReference type="InterPro" id="IPR003018">
    <property type="entry name" value="GAF"/>
</dbReference>
<dbReference type="InterPro" id="IPR029016">
    <property type="entry name" value="GAF-like_dom_sf"/>
</dbReference>
<dbReference type="InterPro" id="IPR036890">
    <property type="entry name" value="HATPase_C_sf"/>
</dbReference>
<dbReference type="InterPro" id="IPR005467">
    <property type="entry name" value="His_kinase_dom"/>
</dbReference>
<dbReference type="InterPro" id="IPR003661">
    <property type="entry name" value="HisK_dim/P_dom"/>
</dbReference>
<dbReference type="InterPro" id="IPR036097">
    <property type="entry name" value="HisK_dim/P_sf"/>
</dbReference>
<dbReference type="InterPro" id="IPR000014">
    <property type="entry name" value="PAS"/>
</dbReference>
<dbReference type="InterPro" id="IPR035965">
    <property type="entry name" value="PAS-like_dom_sf"/>
</dbReference>
<dbReference type="InterPro" id="IPR013654">
    <property type="entry name" value="PAS_2"/>
</dbReference>
<dbReference type="InterPro" id="IPR013767">
    <property type="entry name" value="PAS_fold"/>
</dbReference>
<dbReference type="InterPro" id="IPR044767">
    <property type="entry name" value="Phy_HATPase-like"/>
</dbReference>
<dbReference type="InterPro" id="IPR016132">
    <property type="entry name" value="Phyto_chromo_attachment"/>
</dbReference>
<dbReference type="InterPro" id="IPR013516">
    <property type="entry name" value="Phyto_chromo_BS"/>
</dbReference>
<dbReference type="InterPro" id="IPR001294">
    <property type="entry name" value="Phytochrome"/>
</dbReference>
<dbReference type="InterPro" id="IPR012129">
    <property type="entry name" value="Phytochrome_A-E"/>
</dbReference>
<dbReference type="InterPro" id="IPR013515">
    <property type="entry name" value="Phytochrome_cen-reg"/>
</dbReference>
<dbReference type="InterPro" id="IPR043150">
    <property type="entry name" value="Phytochrome_PHY_sf"/>
</dbReference>
<dbReference type="NCBIfam" id="TIGR00229">
    <property type="entry name" value="sensory_box"/>
    <property type="match status" value="1"/>
</dbReference>
<dbReference type="PANTHER" id="PTHR47876">
    <property type="entry name" value="OS08G0260000 PROTEIN"/>
    <property type="match status" value="1"/>
</dbReference>
<dbReference type="PANTHER" id="PTHR47876:SF3">
    <property type="entry name" value="PHYTOCHROME 1"/>
    <property type="match status" value="1"/>
</dbReference>
<dbReference type="Pfam" id="PF01590">
    <property type="entry name" value="GAF"/>
    <property type="match status" value="1"/>
</dbReference>
<dbReference type="Pfam" id="PF02518">
    <property type="entry name" value="HATPase_c"/>
    <property type="match status" value="1"/>
</dbReference>
<dbReference type="Pfam" id="PF00512">
    <property type="entry name" value="HisKA"/>
    <property type="match status" value="1"/>
</dbReference>
<dbReference type="Pfam" id="PF00989">
    <property type="entry name" value="PAS"/>
    <property type="match status" value="2"/>
</dbReference>
<dbReference type="Pfam" id="PF08446">
    <property type="entry name" value="PAS_2"/>
    <property type="match status" value="1"/>
</dbReference>
<dbReference type="Pfam" id="PF00360">
    <property type="entry name" value="PHY"/>
    <property type="match status" value="1"/>
</dbReference>
<dbReference type="PIRSF" id="PIRSF000084">
    <property type="entry name" value="Phytochrome"/>
    <property type="match status" value="1"/>
</dbReference>
<dbReference type="PRINTS" id="PR01033">
    <property type="entry name" value="PHYTOCHROME"/>
</dbReference>
<dbReference type="SMART" id="SM00065">
    <property type="entry name" value="GAF"/>
    <property type="match status" value="1"/>
</dbReference>
<dbReference type="SMART" id="SM00387">
    <property type="entry name" value="HATPase_c"/>
    <property type="match status" value="1"/>
</dbReference>
<dbReference type="SMART" id="SM00388">
    <property type="entry name" value="HisKA"/>
    <property type="match status" value="1"/>
</dbReference>
<dbReference type="SMART" id="SM00091">
    <property type="entry name" value="PAS"/>
    <property type="match status" value="2"/>
</dbReference>
<dbReference type="SUPFAM" id="SSF55874">
    <property type="entry name" value="ATPase domain of HSP90 chaperone/DNA topoisomerase II/histidine kinase"/>
    <property type="match status" value="1"/>
</dbReference>
<dbReference type="SUPFAM" id="SSF55781">
    <property type="entry name" value="GAF domain-like"/>
    <property type="match status" value="2"/>
</dbReference>
<dbReference type="SUPFAM" id="SSF47384">
    <property type="entry name" value="Homodimeric domain of signal transducing histidine kinase"/>
    <property type="match status" value="1"/>
</dbReference>
<dbReference type="SUPFAM" id="SSF55785">
    <property type="entry name" value="PYP-like sensor domain (PAS domain)"/>
    <property type="match status" value="3"/>
</dbReference>
<dbReference type="PROSITE" id="PS50109">
    <property type="entry name" value="HIS_KIN"/>
    <property type="match status" value="1"/>
</dbReference>
<dbReference type="PROSITE" id="PS50112">
    <property type="entry name" value="PAS"/>
    <property type="match status" value="2"/>
</dbReference>
<dbReference type="PROSITE" id="PS00245">
    <property type="entry name" value="PHYTOCHROME_1"/>
    <property type="match status" value="1"/>
</dbReference>
<dbReference type="PROSITE" id="PS50046">
    <property type="entry name" value="PHYTOCHROME_2"/>
    <property type="match status" value="1"/>
</dbReference>
<name>PHYB1_SOLLC</name>
<proteinExistence type="evidence at transcript level"/>
<keyword id="KW-0025">Alternative splicing</keyword>
<keyword id="KW-0157">Chromophore</keyword>
<keyword id="KW-0600">Photoreceptor protein</keyword>
<keyword id="KW-0675">Receptor</keyword>
<keyword id="KW-1185">Reference proteome</keyword>
<keyword id="KW-0677">Repeat</keyword>
<keyword id="KW-0716">Sensory transduction</keyword>
<keyword id="KW-0804">Transcription</keyword>
<keyword id="KW-0805">Transcription regulation</keyword>
<evidence type="ECO:0000250" key="1"/>
<evidence type="ECO:0000255" key="2"/>
<evidence type="ECO:0000255" key="3">
    <source>
        <dbReference type="PROSITE-ProRule" id="PRU00107"/>
    </source>
</evidence>
<evidence type="ECO:0000255" key="4">
    <source>
        <dbReference type="PROSITE-ProRule" id="PRU00140"/>
    </source>
</evidence>
<evidence type="ECO:0000256" key="5">
    <source>
        <dbReference type="SAM" id="MobiDB-lite"/>
    </source>
</evidence>
<evidence type="ECO:0000269" key="6">
    <source>
    </source>
</evidence>
<evidence type="ECO:0000303" key="7">
    <source>
    </source>
</evidence>
<evidence type="ECO:0000305" key="8"/>
<evidence type="ECO:0000312" key="9">
    <source>
        <dbReference type="EMBL" id="CAA05293.1"/>
    </source>
</evidence>
<accession>Q9ZS62</accession>
<accession>Q9ZS57</accession>
<accession>Q9ZS58</accession>
<accession>Q9ZS59</accession>
<accession>Q9ZS60</accession>
<accession>Q9ZS61</accession>
<feature type="chain" id="PRO_0000171974" description="Phytochrome B1">
    <location>
        <begin position="1"/>
        <end position="1131"/>
    </location>
</feature>
<feature type="domain" description="GAF">
    <location>
        <begin position="229"/>
        <end position="408"/>
    </location>
</feature>
<feature type="domain" description="PAS 1" evidence="4">
    <location>
        <begin position="622"/>
        <end position="693"/>
    </location>
</feature>
<feature type="domain" description="PAS 2" evidence="4">
    <location>
        <begin position="756"/>
        <end position="808"/>
    </location>
</feature>
<feature type="domain" description="Histidine kinase" evidence="3">
    <location>
        <begin position="904"/>
        <end position="1124"/>
    </location>
</feature>
<feature type="region of interest" description="Disordered" evidence="5">
    <location>
        <begin position="1"/>
        <end position="26"/>
    </location>
</feature>
<feature type="compositionally biased region" description="Basic residues" evidence="5">
    <location>
        <begin position="1"/>
        <end position="11"/>
    </location>
</feature>
<feature type="compositionally biased region" description="Low complexity" evidence="5">
    <location>
        <begin position="14"/>
        <end position="25"/>
    </location>
</feature>
<feature type="binding site" description="covalent" evidence="1">
    <location>
        <position position="334"/>
    </location>
    <ligand>
        <name>phytochromobilin</name>
        <dbReference type="ChEBI" id="CHEBI:189064"/>
    </ligand>
</feature>
<feature type="splice variant" id="VSP_051666" description="In isoform 2." evidence="7">
    <location>
        <begin position="23"/>
        <end position="691"/>
    </location>
</feature>
<feature type="splice variant" id="VSP_051667" description="In isoform 3." evidence="7">
    <original>GT</original>
    <variation>VH</variation>
    <location>
        <begin position="23"/>
        <end position="24"/>
    </location>
</feature>
<feature type="splice variant" id="VSP_051668" description="In isoform 3." evidence="7">
    <location>
        <begin position="25"/>
        <end position="1131"/>
    </location>
</feature>
<feature type="splice variant" id="VSP_051669" description="In isoform 4." evidence="7">
    <location>
        <begin position="54"/>
        <end position="691"/>
    </location>
</feature>
<feature type="splice variant" id="VSP_051670" description="In isoform 6." evidence="7">
    <original>GE</original>
    <variation>VH</variation>
    <location>
        <begin position="54"/>
        <end position="55"/>
    </location>
</feature>
<feature type="splice variant" id="VSP_051672" description="In isoform 5." evidence="7">
    <original>ESGKSFDYSQSVKTTTQSVPERQ</original>
    <variation>CGRGLWVCISILCSISNLLPFRI</variation>
    <location>
        <begin position="55"/>
        <end position="77"/>
    </location>
</feature>
<feature type="splice variant" id="VSP_051671" description="In isoform 6." evidence="7">
    <location>
        <begin position="56"/>
        <end position="1131"/>
    </location>
</feature>
<feature type="splice variant" id="VSP_051673" description="In isoform 5." evidence="7">
    <location>
        <begin position="78"/>
        <end position="1131"/>
    </location>
</feature>
<feature type="sequence variant" description="In mutant tri3; temporarily insensitive to red light." evidence="6">
    <original>V</original>
    <variation>F</variation>
    <location>
        <position position="238"/>
    </location>
</feature>
<organism>
    <name type="scientific">Solanum lycopersicum</name>
    <name type="common">Tomato</name>
    <name type="synonym">Lycopersicon esculentum</name>
    <dbReference type="NCBI Taxonomy" id="4081"/>
    <lineage>
        <taxon>Eukaryota</taxon>
        <taxon>Viridiplantae</taxon>
        <taxon>Streptophyta</taxon>
        <taxon>Embryophyta</taxon>
        <taxon>Tracheophyta</taxon>
        <taxon>Spermatophyta</taxon>
        <taxon>Magnoliopsida</taxon>
        <taxon>eudicotyledons</taxon>
        <taxon>Gunneridae</taxon>
        <taxon>Pentapetalae</taxon>
        <taxon>asterids</taxon>
        <taxon>lamiids</taxon>
        <taxon>Solanales</taxon>
        <taxon>Solanaceae</taxon>
        <taxon>Solanoideae</taxon>
        <taxon>Solaneae</taxon>
        <taxon>Solanum</taxon>
        <taxon>Solanum subgen. Lycopersicon</taxon>
    </lineage>
</organism>